<accession>A9B6X5</accession>
<gene>
    <name evidence="1" type="primary">proB</name>
    <name type="ordered locus">Haur_3206</name>
</gene>
<dbReference type="EC" id="2.7.2.11" evidence="1"/>
<dbReference type="EMBL" id="CP000875">
    <property type="protein sequence ID" value="ABX05843.1"/>
    <property type="molecule type" value="Genomic_DNA"/>
</dbReference>
<dbReference type="SMR" id="A9B6X5"/>
<dbReference type="FunCoup" id="A9B6X5">
    <property type="interactions" value="320"/>
</dbReference>
<dbReference type="STRING" id="316274.Haur_3206"/>
<dbReference type="KEGG" id="hau:Haur_3206"/>
<dbReference type="eggNOG" id="COG0263">
    <property type="taxonomic scope" value="Bacteria"/>
</dbReference>
<dbReference type="HOGENOM" id="CLU_025400_2_0_0"/>
<dbReference type="InParanoid" id="A9B6X5"/>
<dbReference type="UniPathway" id="UPA00098">
    <property type="reaction ID" value="UER00359"/>
</dbReference>
<dbReference type="Proteomes" id="UP000000787">
    <property type="component" value="Chromosome"/>
</dbReference>
<dbReference type="GO" id="GO:0005829">
    <property type="term" value="C:cytosol"/>
    <property type="evidence" value="ECO:0007669"/>
    <property type="project" value="TreeGrafter"/>
</dbReference>
<dbReference type="GO" id="GO:0005524">
    <property type="term" value="F:ATP binding"/>
    <property type="evidence" value="ECO:0007669"/>
    <property type="project" value="UniProtKB-KW"/>
</dbReference>
<dbReference type="GO" id="GO:0004349">
    <property type="term" value="F:glutamate 5-kinase activity"/>
    <property type="evidence" value="ECO:0007669"/>
    <property type="project" value="UniProtKB-UniRule"/>
</dbReference>
<dbReference type="GO" id="GO:0003723">
    <property type="term" value="F:RNA binding"/>
    <property type="evidence" value="ECO:0007669"/>
    <property type="project" value="InterPro"/>
</dbReference>
<dbReference type="GO" id="GO:0055129">
    <property type="term" value="P:L-proline biosynthetic process"/>
    <property type="evidence" value="ECO:0007669"/>
    <property type="project" value="UniProtKB-UniRule"/>
</dbReference>
<dbReference type="CDD" id="cd04242">
    <property type="entry name" value="AAK_G5K_ProB"/>
    <property type="match status" value="1"/>
</dbReference>
<dbReference type="CDD" id="cd21157">
    <property type="entry name" value="PUA_G5K"/>
    <property type="match status" value="1"/>
</dbReference>
<dbReference type="FunFam" id="2.30.130.10:FF:000007">
    <property type="entry name" value="Glutamate 5-kinase"/>
    <property type="match status" value="1"/>
</dbReference>
<dbReference type="FunFam" id="3.40.1160.10:FF:000018">
    <property type="entry name" value="Glutamate 5-kinase"/>
    <property type="match status" value="1"/>
</dbReference>
<dbReference type="Gene3D" id="3.40.1160.10">
    <property type="entry name" value="Acetylglutamate kinase-like"/>
    <property type="match status" value="2"/>
</dbReference>
<dbReference type="Gene3D" id="2.30.130.10">
    <property type="entry name" value="PUA domain"/>
    <property type="match status" value="1"/>
</dbReference>
<dbReference type="HAMAP" id="MF_00456">
    <property type="entry name" value="ProB"/>
    <property type="match status" value="1"/>
</dbReference>
<dbReference type="InterPro" id="IPR036393">
    <property type="entry name" value="AceGlu_kinase-like_sf"/>
</dbReference>
<dbReference type="InterPro" id="IPR001048">
    <property type="entry name" value="Asp/Glu/Uridylate_kinase"/>
</dbReference>
<dbReference type="InterPro" id="IPR041739">
    <property type="entry name" value="G5K_ProB"/>
</dbReference>
<dbReference type="InterPro" id="IPR001057">
    <property type="entry name" value="Glu/AcGlu_kinase"/>
</dbReference>
<dbReference type="InterPro" id="IPR011529">
    <property type="entry name" value="Glu_5kinase"/>
</dbReference>
<dbReference type="InterPro" id="IPR005715">
    <property type="entry name" value="Glu_5kinase/COase_Synthase"/>
</dbReference>
<dbReference type="InterPro" id="IPR019797">
    <property type="entry name" value="Glutamate_5-kinase_CS"/>
</dbReference>
<dbReference type="InterPro" id="IPR002478">
    <property type="entry name" value="PUA"/>
</dbReference>
<dbReference type="InterPro" id="IPR015947">
    <property type="entry name" value="PUA-like_sf"/>
</dbReference>
<dbReference type="InterPro" id="IPR036974">
    <property type="entry name" value="PUA_sf"/>
</dbReference>
<dbReference type="NCBIfam" id="TIGR01027">
    <property type="entry name" value="proB"/>
    <property type="match status" value="1"/>
</dbReference>
<dbReference type="PANTHER" id="PTHR43654">
    <property type="entry name" value="GLUTAMATE 5-KINASE"/>
    <property type="match status" value="1"/>
</dbReference>
<dbReference type="PANTHER" id="PTHR43654:SF1">
    <property type="entry name" value="ISOPENTENYL PHOSPHATE KINASE"/>
    <property type="match status" value="1"/>
</dbReference>
<dbReference type="Pfam" id="PF00696">
    <property type="entry name" value="AA_kinase"/>
    <property type="match status" value="1"/>
</dbReference>
<dbReference type="Pfam" id="PF01472">
    <property type="entry name" value="PUA"/>
    <property type="match status" value="1"/>
</dbReference>
<dbReference type="PIRSF" id="PIRSF000729">
    <property type="entry name" value="GK"/>
    <property type="match status" value="1"/>
</dbReference>
<dbReference type="PRINTS" id="PR00474">
    <property type="entry name" value="GLU5KINASE"/>
</dbReference>
<dbReference type="SMART" id="SM00359">
    <property type="entry name" value="PUA"/>
    <property type="match status" value="1"/>
</dbReference>
<dbReference type="SUPFAM" id="SSF53633">
    <property type="entry name" value="Carbamate kinase-like"/>
    <property type="match status" value="1"/>
</dbReference>
<dbReference type="SUPFAM" id="SSF88697">
    <property type="entry name" value="PUA domain-like"/>
    <property type="match status" value="1"/>
</dbReference>
<dbReference type="PROSITE" id="PS00902">
    <property type="entry name" value="GLUTAMATE_5_KINASE"/>
    <property type="match status" value="1"/>
</dbReference>
<dbReference type="PROSITE" id="PS50890">
    <property type="entry name" value="PUA"/>
    <property type="match status" value="1"/>
</dbReference>
<feature type="chain" id="PRO_1000125240" description="Glutamate 5-kinase">
    <location>
        <begin position="1"/>
        <end position="370"/>
    </location>
</feature>
<feature type="domain" description="PUA" evidence="1">
    <location>
        <begin position="278"/>
        <end position="356"/>
    </location>
</feature>
<feature type="binding site" evidence="1">
    <location>
        <position position="12"/>
    </location>
    <ligand>
        <name>ATP</name>
        <dbReference type="ChEBI" id="CHEBI:30616"/>
    </ligand>
</feature>
<feature type="binding site" evidence="1">
    <location>
        <position position="52"/>
    </location>
    <ligand>
        <name>substrate</name>
    </ligand>
</feature>
<feature type="binding site" evidence="1">
    <location>
        <position position="139"/>
    </location>
    <ligand>
        <name>substrate</name>
    </ligand>
</feature>
<feature type="binding site" evidence="1">
    <location>
        <position position="151"/>
    </location>
    <ligand>
        <name>substrate</name>
    </ligand>
</feature>
<feature type="binding site" evidence="1">
    <location>
        <begin position="171"/>
        <end position="172"/>
    </location>
    <ligand>
        <name>ATP</name>
        <dbReference type="ChEBI" id="CHEBI:30616"/>
    </ligand>
</feature>
<feature type="binding site" evidence="1">
    <location>
        <begin position="213"/>
        <end position="219"/>
    </location>
    <ligand>
        <name>ATP</name>
        <dbReference type="ChEBI" id="CHEBI:30616"/>
    </ligand>
</feature>
<keyword id="KW-0028">Amino-acid biosynthesis</keyword>
<keyword id="KW-0067">ATP-binding</keyword>
<keyword id="KW-0963">Cytoplasm</keyword>
<keyword id="KW-0418">Kinase</keyword>
<keyword id="KW-0547">Nucleotide-binding</keyword>
<keyword id="KW-0641">Proline biosynthesis</keyword>
<keyword id="KW-0808">Transferase</keyword>
<comment type="function">
    <text evidence="1">Catalyzes the transfer of a phosphate group to glutamate to form L-glutamate 5-phosphate.</text>
</comment>
<comment type="catalytic activity">
    <reaction evidence="1">
        <text>L-glutamate + ATP = L-glutamyl 5-phosphate + ADP</text>
        <dbReference type="Rhea" id="RHEA:14877"/>
        <dbReference type="ChEBI" id="CHEBI:29985"/>
        <dbReference type="ChEBI" id="CHEBI:30616"/>
        <dbReference type="ChEBI" id="CHEBI:58274"/>
        <dbReference type="ChEBI" id="CHEBI:456216"/>
        <dbReference type="EC" id="2.7.2.11"/>
    </reaction>
</comment>
<comment type="pathway">
    <text evidence="1">Amino-acid biosynthesis; L-proline biosynthesis; L-glutamate 5-semialdehyde from L-glutamate: step 1/2.</text>
</comment>
<comment type="subcellular location">
    <subcellularLocation>
        <location evidence="1">Cytoplasm</location>
    </subcellularLocation>
</comment>
<comment type="similarity">
    <text evidence="1">Belongs to the glutamate 5-kinase family.</text>
</comment>
<organism>
    <name type="scientific">Herpetosiphon aurantiacus (strain ATCC 23779 / DSM 785 / 114-95)</name>
    <dbReference type="NCBI Taxonomy" id="316274"/>
    <lineage>
        <taxon>Bacteria</taxon>
        <taxon>Bacillati</taxon>
        <taxon>Chloroflexota</taxon>
        <taxon>Chloroflexia</taxon>
        <taxon>Herpetosiphonales</taxon>
        <taxon>Herpetosiphonaceae</taxon>
        <taxon>Herpetosiphon</taxon>
    </lineage>
</organism>
<sequence>MDRDLHMRIVVKLGTSVLTDGTDRLHRPRMVDLARQMAQLREAGHEVVLVSSGAVLAGWERLGFPKRRRELTHKQALAAVGQGRLMHIYGQLFEIYDVPVAQTLLTRADLRDRVRYLNARATLLTCLEIGVLPIINENDAVAVDEIRVGDNDTLSALVANLVDAQLLVILSDIAGLYSADPRHNPEATLIDDVAAVNEQVYALAGAAGSHRGTGGMFTKIQAAELATRAGTTMVIAAGNEPNVLVRLVAGESVGTRFRPVSTRLESRKRWIMAERVRQAHIAVDAGAVQALTQQGRSLLPAGIVAVEGEWRRGQTVAIVAPDGQTIACGLCQYAAHEVAQIKGSRTSDIESILGYSYGAEVIHRDDMVAF</sequence>
<protein>
    <recommendedName>
        <fullName evidence="1">Glutamate 5-kinase</fullName>
        <ecNumber evidence="1">2.7.2.11</ecNumber>
    </recommendedName>
    <alternativeName>
        <fullName evidence="1">Gamma-glutamyl kinase</fullName>
        <shortName evidence="1">GK</shortName>
    </alternativeName>
</protein>
<proteinExistence type="inferred from homology"/>
<name>PROB_HERA2</name>
<evidence type="ECO:0000255" key="1">
    <source>
        <dbReference type="HAMAP-Rule" id="MF_00456"/>
    </source>
</evidence>
<reference key="1">
    <citation type="journal article" date="2011" name="Stand. Genomic Sci.">
        <title>Complete genome sequence of the filamentous gliding predatory bacterium Herpetosiphon aurantiacus type strain (114-95(T)).</title>
        <authorList>
            <person name="Kiss H."/>
            <person name="Nett M."/>
            <person name="Domin N."/>
            <person name="Martin K."/>
            <person name="Maresca J.A."/>
            <person name="Copeland A."/>
            <person name="Lapidus A."/>
            <person name="Lucas S."/>
            <person name="Berry K.W."/>
            <person name="Glavina Del Rio T."/>
            <person name="Dalin E."/>
            <person name="Tice H."/>
            <person name="Pitluck S."/>
            <person name="Richardson P."/>
            <person name="Bruce D."/>
            <person name="Goodwin L."/>
            <person name="Han C."/>
            <person name="Detter J.C."/>
            <person name="Schmutz J."/>
            <person name="Brettin T."/>
            <person name="Land M."/>
            <person name="Hauser L."/>
            <person name="Kyrpides N.C."/>
            <person name="Ivanova N."/>
            <person name="Goeker M."/>
            <person name="Woyke T."/>
            <person name="Klenk H.P."/>
            <person name="Bryant D.A."/>
        </authorList>
    </citation>
    <scope>NUCLEOTIDE SEQUENCE [LARGE SCALE GENOMIC DNA]</scope>
    <source>
        <strain>ATCC 23779 / DSM 785 / 114-95</strain>
    </source>
</reference>